<name>HEM1_VIBA3</name>
<proteinExistence type="inferred from homology"/>
<protein>
    <recommendedName>
        <fullName evidence="1">Glutamyl-tRNA reductase</fullName>
        <shortName evidence="1">GluTR</shortName>
        <ecNumber evidence="1">1.2.1.70</ecNumber>
    </recommendedName>
</protein>
<organism>
    <name type="scientific">Vibrio atlanticus (strain LGP32)</name>
    <name type="common">Vibrio splendidus (strain Mel32)</name>
    <dbReference type="NCBI Taxonomy" id="575788"/>
    <lineage>
        <taxon>Bacteria</taxon>
        <taxon>Pseudomonadati</taxon>
        <taxon>Pseudomonadota</taxon>
        <taxon>Gammaproteobacteria</taxon>
        <taxon>Vibrionales</taxon>
        <taxon>Vibrionaceae</taxon>
        <taxon>Vibrio</taxon>
    </lineage>
</organism>
<reference key="1">
    <citation type="submission" date="2009-02" db="EMBL/GenBank/DDBJ databases">
        <title>Vibrio splendidus str. LGP32 complete genome.</title>
        <authorList>
            <person name="Mazel D."/>
            <person name="Le Roux F."/>
        </authorList>
    </citation>
    <scope>NUCLEOTIDE SEQUENCE [LARGE SCALE GENOMIC DNA]</scope>
    <source>
        <strain>LGP32</strain>
    </source>
</reference>
<feature type="chain" id="PRO_1000190544" description="Glutamyl-tRNA reductase">
    <location>
        <begin position="1"/>
        <end position="419"/>
    </location>
</feature>
<feature type="active site" description="Nucleophile" evidence="1">
    <location>
        <position position="50"/>
    </location>
</feature>
<feature type="binding site" evidence="1">
    <location>
        <begin position="49"/>
        <end position="52"/>
    </location>
    <ligand>
        <name>substrate</name>
    </ligand>
</feature>
<feature type="binding site" evidence="1">
    <location>
        <position position="107"/>
    </location>
    <ligand>
        <name>substrate</name>
    </ligand>
</feature>
<feature type="binding site" evidence="1">
    <location>
        <begin position="112"/>
        <end position="114"/>
    </location>
    <ligand>
        <name>substrate</name>
    </ligand>
</feature>
<feature type="binding site" evidence="1">
    <location>
        <position position="118"/>
    </location>
    <ligand>
        <name>substrate</name>
    </ligand>
</feature>
<feature type="binding site" evidence="1">
    <location>
        <begin position="187"/>
        <end position="192"/>
    </location>
    <ligand>
        <name>NADP(+)</name>
        <dbReference type="ChEBI" id="CHEBI:58349"/>
    </ligand>
</feature>
<feature type="site" description="Important for activity" evidence="1">
    <location>
        <position position="97"/>
    </location>
</feature>
<sequence>MSLLAVGINHNTASVELREKVAFGPDKLSEALKQLNANAHVNGSVILSTCNRTEVYCDVKGVAKNKLIDWLSVFHQVSPEELKPSIYIHEEQAAIKHLMRVACGLDSLVLGEPQILGQVKQAYTDSRDNKSVDASMEKLFQKSFSVAKRVRTETEIGGSAVSVAYAACTLAKHIFESIAESTVLLVGAGETIELVAKHLSANGCTKMIVANRTRERALGLAEEFGAEVISLNEIPDHLHRADIVISSTASPLPIIGKGMVETALKTRKHQPMLLVDIAVPRDVESQVGDLNDAYLYSVDDLQSIVDGNIEQRKVEAIQAEAIVSEESAAFMSWMRSLQAVDSIRDYRKSANEIREELLSKSLQSLAAGGDPEKVLLELSNKLTNKLIHAPTRALQSAAEQGEPAKLTVIRQSLGLENPQ</sequence>
<gene>
    <name evidence="1" type="primary">hemA</name>
    <name type="ordered locus">VS_0751</name>
</gene>
<comment type="function">
    <text evidence="1">Catalyzes the NADPH-dependent reduction of glutamyl-tRNA(Glu) to glutamate 1-semialdehyde (GSA).</text>
</comment>
<comment type="catalytic activity">
    <reaction evidence="1">
        <text>(S)-4-amino-5-oxopentanoate + tRNA(Glu) + NADP(+) = L-glutamyl-tRNA(Glu) + NADPH + H(+)</text>
        <dbReference type="Rhea" id="RHEA:12344"/>
        <dbReference type="Rhea" id="RHEA-COMP:9663"/>
        <dbReference type="Rhea" id="RHEA-COMP:9680"/>
        <dbReference type="ChEBI" id="CHEBI:15378"/>
        <dbReference type="ChEBI" id="CHEBI:57501"/>
        <dbReference type="ChEBI" id="CHEBI:57783"/>
        <dbReference type="ChEBI" id="CHEBI:58349"/>
        <dbReference type="ChEBI" id="CHEBI:78442"/>
        <dbReference type="ChEBI" id="CHEBI:78520"/>
        <dbReference type="EC" id="1.2.1.70"/>
    </reaction>
</comment>
<comment type="pathway">
    <text evidence="1">Porphyrin-containing compound metabolism; protoporphyrin-IX biosynthesis; 5-aminolevulinate from L-glutamyl-tRNA(Glu): step 1/2.</text>
</comment>
<comment type="subunit">
    <text evidence="1">Homodimer.</text>
</comment>
<comment type="domain">
    <text evidence="1">Possesses an unusual extended V-shaped dimeric structure with each monomer consisting of three distinct domains arranged along a curved 'spinal' alpha-helix. The N-terminal catalytic domain specifically recognizes the glutamate moiety of the substrate. The second domain is the NADPH-binding domain, and the third C-terminal domain is responsible for dimerization.</text>
</comment>
<comment type="miscellaneous">
    <text evidence="1">During catalysis, the active site Cys acts as a nucleophile attacking the alpha-carbonyl group of tRNA-bound glutamate with the formation of a thioester intermediate between enzyme and glutamate, and the concomitant release of tRNA(Glu). The thioester intermediate is finally reduced by direct hydride transfer from NADPH, to form the product GSA.</text>
</comment>
<comment type="similarity">
    <text evidence="1">Belongs to the glutamyl-tRNA reductase family.</text>
</comment>
<evidence type="ECO:0000255" key="1">
    <source>
        <dbReference type="HAMAP-Rule" id="MF_00087"/>
    </source>
</evidence>
<keyword id="KW-0521">NADP</keyword>
<keyword id="KW-0560">Oxidoreductase</keyword>
<keyword id="KW-0627">Porphyrin biosynthesis</keyword>
<accession>B7VKH2</accession>
<dbReference type="EC" id="1.2.1.70" evidence="1"/>
<dbReference type="EMBL" id="FM954972">
    <property type="protein sequence ID" value="CAV17729.1"/>
    <property type="molecule type" value="Genomic_DNA"/>
</dbReference>
<dbReference type="SMR" id="B7VKH2"/>
<dbReference type="STRING" id="575788.VS_0751"/>
<dbReference type="KEGG" id="vsp:VS_0751"/>
<dbReference type="eggNOG" id="COG0373">
    <property type="taxonomic scope" value="Bacteria"/>
</dbReference>
<dbReference type="HOGENOM" id="CLU_035113_2_2_6"/>
<dbReference type="UniPathway" id="UPA00251">
    <property type="reaction ID" value="UER00316"/>
</dbReference>
<dbReference type="Proteomes" id="UP000009100">
    <property type="component" value="Chromosome 1"/>
</dbReference>
<dbReference type="GO" id="GO:0008883">
    <property type="term" value="F:glutamyl-tRNA reductase activity"/>
    <property type="evidence" value="ECO:0007669"/>
    <property type="project" value="UniProtKB-UniRule"/>
</dbReference>
<dbReference type="GO" id="GO:0050661">
    <property type="term" value="F:NADP binding"/>
    <property type="evidence" value="ECO:0007669"/>
    <property type="project" value="InterPro"/>
</dbReference>
<dbReference type="GO" id="GO:0019353">
    <property type="term" value="P:protoporphyrinogen IX biosynthetic process from glutamate"/>
    <property type="evidence" value="ECO:0007669"/>
    <property type="project" value="TreeGrafter"/>
</dbReference>
<dbReference type="CDD" id="cd05213">
    <property type="entry name" value="NAD_bind_Glutamyl_tRNA_reduct"/>
    <property type="match status" value="1"/>
</dbReference>
<dbReference type="FunFam" id="3.30.460.30:FF:000001">
    <property type="entry name" value="Glutamyl-tRNA reductase"/>
    <property type="match status" value="1"/>
</dbReference>
<dbReference type="FunFam" id="3.40.50.720:FF:000031">
    <property type="entry name" value="Glutamyl-tRNA reductase"/>
    <property type="match status" value="1"/>
</dbReference>
<dbReference type="Gene3D" id="3.30.460.30">
    <property type="entry name" value="Glutamyl-tRNA reductase, N-terminal domain"/>
    <property type="match status" value="1"/>
</dbReference>
<dbReference type="Gene3D" id="3.40.50.720">
    <property type="entry name" value="NAD(P)-binding Rossmann-like Domain"/>
    <property type="match status" value="1"/>
</dbReference>
<dbReference type="HAMAP" id="MF_00087">
    <property type="entry name" value="Glu_tRNA_reductase"/>
    <property type="match status" value="1"/>
</dbReference>
<dbReference type="InterPro" id="IPR000343">
    <property type="entry name" value="4pyrrol_synth_GluRdtase"/>
</dbReference>
<dbReference type="InterPro" id="IPR015896">
    <property type="entry name" value="4pyrrol_synth_GluRdtase_dimer"/>
</dbReference>
<dbReference type="InterPro" id="IPR015895">
    <property type="entry name" value="4pyrrol_synth_GluRdtase_N"/>
</dbReference>
<dbReference type="InterPro" id="IPR018214">
    <property type="entry name" value="GluRdtase_CS"/>
</dbReference>
<dbReference type="InterPro" id="IPR036453">
    <property type="entry name" value="GluRdtase_dimer_dom_sf"/>
</dbReference>
<dbReference type="InterPro" id="IPR036343">
    <property type="entry name" value="GluRdtase_N_sf"/>
</dbReference>
<dbReference type="InterPro" id="IPR036291">
    <property type="entry name" value="NAD(P)-bd_dom_sf"/>
</dbReference>
<dbReference type="InterPro" id="IPR006151">
    <property type="entry name" value="Shikm_DH/Glu-tRNA_Rdtase"/>
</dbReference>
<dbReference type="NCBIfam" id="TIGR01035">
    <property type="entry name" value="hemA"/>
    <property type="match status" value="1"/>
</dbReference>
<dbReference type="PANTHER" id="PTHR43013">
    <property type="entry name" value="GLUTAMYL-TRNA REDUCTASE"/>
    <property type="match status" value="1"/>
</dbReference>
<dbReference type="PANTHER" id="PTHR43013:SF1">
    <property type="entry name" value="GLUTAMYL-TRNA REDUCTASE"/>
    <property type="match status" value="1"/>
</dbReference>
<dbReference type="Pfam" id="PF00745">
    <property type="entry name" value="GlutR_dimer"/>
    <property type="match status" value="1"/>
</dbReference>
<dbReference type="Pfam" id="PF05201">
    <property type="entry name" value="GlutR_N"/>
    <property type="match status" value="1"/>
</dbReference>
<dbReference type="Pfam" id="PF01488">
    <property type="entry name" value="Shikimate_DH"/>
    <property type="match status" value="1"/>
</dbReference>
<dbReference type="PIRSF" id="PIRSF000445">
    <property type="entry name" value="4pyrrol_synth_GluRdtase"/>
    <property type="match status" value="1"/>
</dbReference>
<dbReference type="SUPFAM" id="SSF69742">
    <property type="entry name" value="Glutamyl tRNA-reductase catalytic, N-terminal domain"/>
    <property type="match status" value="1"/>
</dbReference>
<dbReference type="SUPFAM" id="SSF69075">
    <property type="entry name" value="Glutamyl tRNA-reductase dimerization domain"/>
    <property type="match status" value="1"/>
</dbReference>
<dbReference type="SUPFAM" id="SSF51735">
    <property type="entry name" value="NAD(P)-binding Rossmann-fold domains"/>
    <property type="match status" value="1"/>
</dbReference>
<dbReference type="PROSITE" id="PS00747">
    <property type="entry name" value="GLUTR"/>
    <property type="match status" value="1"/>
</dbReference>